<reference key="1">
    <citation type="journal article" date="2008" name="J. Bacteriol.">
        <title>Genome sequence of the chemolithoautotrophic bacterium Oligotropha carboxidovorans OM5T.</title>
        <authorList>
            <person name="Paul D."/>
            <person name="Bridges S."/>
            <person name="Burgess S.C."/>
            <person name="Dandass Y."/>
            <person name="Lawrence M.L."/>
        </authorList>
    </citation>
    <scope>NUCLEOTIDE SEQUENCE [LARGE SCALE GENOMIC DNA]</scope>
    <source>
        <strain>ATCC 49405 / DSM 1227 / KCTC 32145 / OM5</strain>
    </source>
</reference>
<reference key="2">
    <citation type="journal article" date="2011" name="J. Bacteriol.">
        <title>Complete genome sequences of the chemolithoautotrophic Oligotropha carboxidovorans strains OM4 and OM5.</title>
        <authorList>
            <person name="Volland S."/>
            <person name="Rachinger M."/>
            <person name="Strittmatter A."/>
            <person name="Daniel R."/>
            <person name="Gottschalk G."/>
            <person name="Meyer O."/>
        </authorList>
    </citation>
    <scope>NUCLEOTIDE SEQUENCE [LARGE SCALE GENOMIC DNA]</scope>
    <source>
        <strain>ATCC 49405 / DSM 1227 / KCTC 32145 / OM5</strain>
    </source>
</reference>
<organism>
    <name type="scientific">Afipia carboxidovorans (strain ATCC 49405 / DSM 1227 / KCTC 32145 / OM5)</name>
    <name type="common">Oligotropha carboxidovorans</name>
    <dbReference type="NCBI Taxonomy" id="504832"/>
    <lineage>
        <taxon>Bacteria</taxon>
        <taxon>Pseudomonadati</taxon>
        <taxon>Pseudomonadota</taxon>
        <taxon>Alphaproteobacteria</taxon>
        <taxon>Hyphomicrobiales</taxon>
        <taxon>Nitrobacteraceae</taxon>
        <taxon>Afipia</taxon>
    </lineage>
</organism>
<gene>
    <name evidence="1" type="primary">queA</name>
    <name type="ordered locus">OCAR_6228</name>
    <name type="ordered locus">OCA5_c18020</name>
</gene>
<proteinExistence type="inferred from homology"/>
<name>QUEA_AFIC5</name>
<evidence type="ECO:0000255" key="1">
    <source>
        <dbReference type="HAMAP-Rule" id="MF_00113"/>
    </source>
</evidence>
<protein>
    <recommendedName>
        <fullName evidence="1">S-adenosylmethionine:tRNA ribosyltransferase-isomerase</fullName>
        <ecNumber evidence="1">2.4.99.17</ecNumber>
    </recommendedName>
    <alternativeName>
        <fullName evidence="1">Queuosine biosynthesis protein QueA</fullName>
    </alternativeName>
</protein>
<dbReference type="EC" id="2.4.99.17" evidence="1"/>
<dbReference type="EMBL" id="CP001196">
    <property type="protein sequence ID" value="ACI93341.1"/>
    <property type="molecule type" value="Genomic_DNA"/>
</dbReference>
<dbReference type="EMBL" id="CP002826">
    <property type="protein sequence ID" value="AEI06516.1"/>
    <property type="molecule type" value="Genomic_DNA"/>
</dbReference>
<dbReference type="RefSeq" id="WP_012563367.1">
    <property type="nucleotide sequence ID" value="NC_015684.1"/>
</dbReference>
<dbReference type="SMR" id="B6JFC2"/>
<dbReference type="STRING" id="504832.OCA5_c18020"/>
<dbReference type="KEGG" id="oca:OCAR_6228"/>
<dbReference type="KEGG" id="ocg:OCA5_c18020"/>
<dbReference type="PATRIC" id="fig|504832.7.peg.1928"/>
<dbReference type="eggNOG" id="COG0809">
    <property type="taxonomic scope" value="Bacteria"/>
</dbReference>
<dbReference type="HOGENOM" id="CLU_039110_1_1_5"/>
<dbReference type="OrthoDB" id="9805933at2"/>
<dbReference type="UniPathway" id="UPA00392"/>
<dbReference type="Proteomes" id="UP000007730">
    <property type="component" value="Chromosome"/>
</dbReference>
<dbReference type="GO" id="GO:0005737">
    <property type="term" value="C:cytoplasm"/>
    <property type="evidence" value="ECO:0007669"/>
    <property type="project" value="UniProtKB-SubCell"/>
</dbReference>
<dbReference type="GO" id="GO:0051075">
    <property type="term" value="F:S-adenosylmethionine:tRNA ribosyltransferase-isomerase activity"/>
    <property type="evidence" value="ECO:0007669"/>
    <property type="project" value="UniProtKB-EC"/>
</dbReference>
<dbReference type="GO" id="GO:0008616">
    <property type="term" value="P:queuosine biosynthetic process"/>
    <property type="evidence" value="ECO:0007669"/>
    <property type="project" value="UniProtKB-UniRule"/>
</dbReference>
<dbReference type="GO" id="GO:0002099">
    <property type="term" value="P:tRNA wobble guanine modification"/>
    <property type="evidence" value="ECO:0007669"/>
    <property type="project" value="TreeGrafter"/>
</dbReference>
<dbReference type="FunFam" id="3.40.1780.10:FF:000001">
    <property type="entry name" value="S-adenosylmethionine:tRNA ribosyltransferase-isomerase"/>
    <property type="match status" value="1"/>
</dbReference>
<dbReference type="Gene3D" id="2.40.10.240">
    <property type="entry name" value="QueA-like"/>
    <property type="match status" value="1"/>
</dbReference>
<dbReference type="Gene3D" id="3.40.1780.10">
    <property type="entry name" value="QueA-like"/>
    <property type="match status" value="1"/>
</dbReference>
<dbReference type="HAMAP" id="MF_00113">
    <property type="entry name" value="QueA"/>
    <property type="match status" value="1"/>
</dbReference>
<dbReference type="InterPro" id="IPR003699">
    <property type="entry name" value="QueA"/>
</dbReference>
<dbReference type="InterPro" id="IPR042118">
    <property type="entry name" value="QueA_dom1"/>
</dbReference>
<dbReference type="InterPro" id="IPR042119">
    <property type="entry name" value="QueA_dom2"/>
</dbReference>
<dbReference type="InterPro" id="IPR036100">
    <property type="entry name" value="QueA_sf"/>
</dbReference>
<dbReference type="NCBIfam" id="NF001140">
    <property type="entry name" value="PRK00147.1"/>
    <property type="match status" value="1"/>
</dbReference>
<dbReference type="NCBIfam" id="TIGR00113">
    <property type="entry name" value="queA"/>
    <property type="match status" value="1"/>
</dbReference>
<dbReference type="PANTHER" id="PTHR30307">
    <property type="entry name" value="S-ADENOSYLMETHIONINE:TRNA RIBOSYLTRANSFERASE-ISOMERASE"/>
    <property type="match status" value="1"/>
</dbReference>
<dbReference type="PANTHER" id="PTHR30307:SF0">
    <property type="entry name" value="S-ADENOSYLMETHIONINE:TRNA RIBOSYLTRANSFERASE-ISOMERASE"/>
    <property type="match status" value="1"/>
</dbReference>
<dbReference type="Pfam" id="PF02547">
    <property type="entry name" value="Queuosine_synth"/>
    <property type="match status" value="1"/>
</dbReference>
<dbReference type="SUPFAM" id="SSF111337">
    <property type="entry name" value="QueA-like"/>
    <property type="match status" value="1"/>
</dbReference>
<feature type="chain" id="PRO_1000094793" description="S-adenosylmethionine:tRNA ribosyltransferase-isomerase">
    <location>
        <begin position="1"/>
        <end position="361"/>
    </location>
</feature>
<comment type="function">
    <text evidence="1">Transfers and isomerizes the ribose moiety from AdoMet to the 7-aminomethyl group of 7-deazaguanine (preQ1-tRNA) to give epoxyqueuosine (oQ-tRNA).</text>
</comment>
<comment type="catalytic activity">
    <reaction evidence="1">
        <text>7-aminomethyl-7-carbaguanosine(34) in tRNA + S-adenosyl-L-methionine = epoxyqueuosine(34) in tRNA + adenine + L-methionine + 2 H(+)</text>
        <dbReference type="Rhea" id="RHEA:32155"/>
        <dbReference type="Rhea" id="RHEA-COMP:10342"/>
        <dbReference type="Rhea" id="RHEA-COMP:18582"/>
        <dbReference type="ChEBI" id="CHEBI:15378"/>
        <dbReference type="ChEBI" id="CHEBI:16708"/>
        <dbReference type="ChEBI" id="CHEBI:57844"/>
        <dbReference type="ChEBI" id="CHEBI:59789"/>
        <dbReference type="ChEBI" id="CHEBI:82833"/>
        <dbReference type="ChEBI" id="CHEBI:194443"/>
        <dbReference type="EC" id="2.4.99.17"/>
    </reaction>
</comment>
<comment type="pathway">
    <text evidence="1">tRNA modification; tRNA-queuosine biosynthesis.</text>
</comment>
<comment type="subunit">
    <text evidence="1">Monomer.</text>
</comment>
<comment type="subcellular location">
    <subcellularLocation>
        <location evidence="1">Cytoplasm</location>
    </subcellularLocation>
</comment>
<comment type="similarity">
    <text evidence="1">Belongs to the QueA family.</text>
</comment>
<keyword id="KW-0963">Cytoplasm</keyword>
<keyword id="KW-0671">Queuosine biosynthesis</keyword>
<keyword id="KW-1185">Reference proteome</keyword>
<keyword id="KW-0949">S-adenosyl-L-methionine</keyword>
<keyword id="KW-0808">Transferase</keyword>
<accession>B6JFC2</accession>
<accession>F8BT19</accession>
<sequence length="361" mass="38694">MRTDLFDFDLPPECIALRPAEPRDSARLLLVRPNVGVEDHSVRDLPGLLAPGDQIVVNDTKVIAAQLSGRRIGGTSEPHIDVTLIKRIDGSRWQALVRPARKLSEGDVLRFGNEGRVCLLGNLDASVEAKGEAGEVTLAFAFHGPVLDQAIADLGAPPLPPYIASRRAPDDKDVGDYQTMFAKNEGAVAAPTAGLHFTPALEAALAARGIGIQRLTLHVGAGTFLPVKADDTDDHKMHSEWGTVSEETAKTLNEARAKGGRVVAVGSTSMRLLESAATEDGIIQPFTGETAIFITPGYKFRAVDVMMTNFHLPRSTLFMLVSAFSGLDTMRAAYAHAIAKGYRFYSYGDACLLFRNAGAAS</sequence>